<evidence type="ECO:0000255" key="1">
    <source>
        <dbReference type="HAMAP-Rule" id="MF_01062"/>
    </source>
</evidence>
<sequence>MDNVVDRHVFYISDGTAITAEVLGHAVMSQFPVTISSITLPFVENESRARAVKDQIDAIYQQTGVRPLVFYSIVLPEIRAIILQSEGFCQDIVQALVAPLQQEMKLDPTPIAHRTHGLNPGNLNKYDARIAAIDYTLAHDDGISLRNLDQAQVILLGVSRCGKTPTSLYLAMQFGIRAANYPFIADDMDNLTLPTSLKPLQHKLFGLTIDPERLAAIREERRENSRYASLRQCRMEVAEVEALYRKNQIPCLNSTNYSVEEIATKILDIMGLNRRMY</sequence>
<protein>
    <recommendedName>
        <fullName evidence="1">Phosphoenolpyruvate synthase regulatory protein</fullName>
        <shortName evidence="1">PEP synthase regulatory protein</shortName>
        <shortName evidence="1">PSRP</shortName>
        <ecNumber evidence="1">2.7.11.33</ecNumber>
        <ecNumber evidence="1">2.7.4.28</ecNumber>
    </recommendedName>
    <alternativeName>
        <fullName evidence="1">Pyruvate, water dikinase regulatory protein</fullName>
    </alternativeName>
</protein>
<accession>B4TGI5</accession>
<dbReference type="EC" id="2.7.11.33" evidence="1"/>
<dbReference type="EC" id="2.7.4.28" evidence="1"/>
<dbReference type="EMBL" id="CP001120">
    <property type="protein sequence ID" value="ACF68140.1"/>
    <property type="molecule type" value="Genomic_DNA"/>
</dbReference>
<dbReference type="RefSeq" id="WP_000370992.1">
    <property type="nucleotide sequence ID" value="NC_011083.1"/>
</dbReference>
<dbReference type="SMR" id="B4TGI5"/>
<dbReference type="KEGG" id="seh:SeHA_C1477"/>
<dbReference type="HOGENOM" id="CLU_046206_1_0_6"/>
<dbReference type="Proteomes" id="UP000001866">
    <property type="component" value="Chromosome"/>
</dbReference>
<dbReference type="GO" id="GO:0043531">
    <property type="term" value="F:ADP binding"/>
    <property type="evidence" value="ECO:0007669"/>
    <property type="project" value="UniProtKB-UniRule"/>
</dbReference>
<dbReference type="GO" id="GO:0005524">
    <property type="term" value="F:ATP binding"/>
    <property type="evidence" value="ECO:0007669"/>
    <property type="project" value="InterPro"/>
</dbReference>
<dbReference type="GO" id="GO:0016776">
    <property type="term" value="F:phosphotransferase activity, phosphate group as acceptor"/>
    <property type="evidence" value="ECO:0007669"/>
    <property type="project" value="UniProtKB-UniRule"/>
</dbReference>
<dbReference type="GO" id="GO:0004674">
    <property type="term" value="F:protein serine/threonine kinase activity"/>
    <property type="evidence" value="ECO:0007669"/>
    <property type="project" value="UniProtKB-UniRule"/>
</dbReference>
<dbReference type="HAMAP" id="MF_01062">
    <property type="entry name" value="PSRP"/>
    <property type="match status" value="1"/>
</dbReference>
<dbReference type="InterPro" id="IPR005177">
    <property type="entry name" value="Kinase-pyrophosphorylase"/>
</dbReference>
<dbReference type="InterPro" id="IPR026530">
    <property type="entry name" value="PSRP"/>
</dbReference>
<dbReference type="NCBIfam" id="NF003742">
    <property type="entry name" value="PRK05339.1"/>
    <property type="match status" value="1"/>
</dbReference>
<dbReference type="PANTHER" id="PTHR31756">
    <property type="entry name" value="PYRUVATE, PHOSPHATE DIKINASE REGULATORY PROTEIN 1, CHLOROPLASTIC"/>
    <property type="match status" value="1"/>
</dbReference>
<dbReference type="PANTHER" id="PTHR31756:SF3">
    <property type="entry name" value="PYRUVATE, PHOSPHATE DIKINASE REGULATORY PROTEIN 1, CHLOROPLASTIC"/>
    <property type="match status" value="1"/>
</dbReference>
<dbReference type="Pfam" id="PF03618">
    <property type="entry name" value="Kinase-PPPase"/>
    <property type="match status" value="1"/>
</dbReference>
<proteinExistence type="inferred from homology"/>
<keyword id="KW-0418">Kinase</keyword>
<keyword id="KW-0547">Nucleotide-binding</keyword>
<keyword id="KW-0723">Serine/threonine-protein kinase</keyword>
<keyword id="KW-0808">Transferase</keyword>
<name>PSRP_SALHS</name>
<organism>
    <name type="scientific">Salmonella heidelberg (strain SL476)</name>
    <dbReference type="NCBI Taxonomy" id="454169"/>
    <lineage>
        <taxon>Bacteria</taxon>
        <taxon>Pseudomonadati</taxon>
        <taxon>Pseudomonadota</taxon>
        <taxon>Gammaproteobacteria</taxon>
        <taxon>Enterobacterales</taxon>
        <taxon>Enterobacteriaceae</taxon>
        <taxon>Salmonella</taxon>
    </lineage>
</organism>
<reference key="1">
    <citation type="journal article" date="2011" name="J. Bacteriol.">
        <title>Comparative genomics of 28 Salmonella enterica isolates: evidence for CRISPR-mediated adaptive sublineage evolution.</title>
        <authorList>
            <person name="Fricke W.F."/>
            <person name="Mammel M.K."/>
            <person name="McDermott P.F."/>
            <person name="Tartera C."/>
            <person name="White D.G."/>
            <person name="Leclerc J.E."/>
            <person name="Ravel J."/>
            <person name="Cebula T.A."/>
        </authorList>
    </citation>
    <scope>NUCLEOTIDE SEQUENCE [LARGE SCALE GENOMIC DNA]</scope>
    <source>
        <strain>SL476</strain>
    </source>
</reference>
<feature type="chain" id="PRO_1000136492" description="Phosphoenolpyruvate synthase regulatory protein">
    <location>
        <begin position="1"/>
        <end position="277"/>
    </location>
</feature>
<feature type="binding site" evidence="1">
    <location>
        <begin position="157"/>
        <end position="164"/>
    </location>
    <ligand>
        <name>ADP</name>
        <dbReference type="ChEBI" id="CHEBI:456216"/>
    </ligand>
</feature>
<gene>
    <name evidence="1" type="primary">ppsR</name>
    <name type="ordered locus">SeHA_C1477</name>
</gene>
<comment type="function">
    <text evidence="1">Bifunctional serine/threonine kinase and phosphorylase involved in the regulation of the phosphoenolpyruvate synthase (PEPS) by catalyzing its phosphorylation/dephosphorylation.</text>
</comment>
<comment type="catalytic activity">
    <reaction evidence="1">
        <text>[pyruvate, water dikinase] + ADP = [pyruvate, water dikinase]-phosphate + AMP + H(+)</text>
        <dbReference type="Rhea" id="RHEA:46020"/>
        <dbReference type="Rhea" id="RHEA-COMP:11425"/>
        <dbReference type="Rhea" id="RHEA-COMP:11426"/>
        <dbReference type="ChEBI" id="CHEBI:15378"/>
        <dbReference type="ChEBI" id="CHEBI:43176"/>
        <dbReference type="ChEBI" id="CHEBI:68546"/>
        <dbReference type="ChEBI" id="CHEBI:456215"/>
        <dbReference type="ChEBI" id="CHEBI:456216"/>
        <dbReference type="EC" id="2.7.11.33"/>
    </reaction>
</comment>
<comment type="catalytic activity">
    <reaction evidence="1">
        <text>[pyruvate, water dikinase]-phosphate + phosphate + H(+) = [pyruvate, water dikinase] + diphosphate</text>
        <dbReference type="Rhea" id="RHEA:48580"/>
        <dbReference type="Rhea" id="RHEA-COMP:11425"/>
        <dbReference type="Rhea" id="RHEA-COMP:11426"/>
        <dbReference type="ChEBI" id="CHEBI:15378"/>
        <dbReference type="ChEBI" id="CHEBI:33019"/>
        <dbReference type="ChEBI" id="CHEBI:43176"/>
        <dbReference type="ChEBI" id="CHEBI:43474"/>
        <dbReference type="ChEBI" id="CHEBI:68546"/>
        <dbReference type="EC" id="2.7.4.28"/>
    </reaction>
</comment>
<comment type="similarity">
    <text evidence="1">Belongs to the pyruvate, phosphate/water dikinase regulatory protein family. PSRP subfamily.</text>
</comment>